<evidence type="ECO:0000250" key="1">
    <source>
        <dbReference type="UniProtKB" id="Q15024"/>
    </source>
</evidence>
<evidence type="ECO:0000305" key="2"/>
<dbReference type="EMBL" id="AK004437">
    <property type="protein sequence ID" value="BAB23303.1"/>
    <property type="molecule type" value="mRNA"/>
</dbReference>
<dbReference type="EMBL" id="AK011294">
    <property type="status" value="NOT_ANNOTATED_CDS"/>
    <property type="molecule type" value="mRNA"/>
</dbReference>
<dbReference type="EMBL" id="AC134248">
    <property type="status" value="NOT_ANNOTATED_CDS"/>
    <property type="molecule type" value="Genomic_DNA"/>
</dbReference>
<dbReference type="EMBL" id="CH466587">
    <property type="protein sequence ID" value="EDL09072.1"/>
    <property type="molecule type" value="Genomic_DNA"/>
</dbReference>
<dbReference type="EMBL" id="BC094932">
    <property type="protein sequence ID" value="AAH94932.1"/>
    <property type="molecule type" value="mRNA"/>
</dbReference>
<dbReference type="EMBL" id="BC132363">
    <property type="protein sequence ID" value="AAI32364.1"/>
    <property type="molecule type" value="mRNA"/>
</dbReference>
<dbReference type="EMBL" id="BC145675">
    <property type="protein sequence ID" value="AAI45676.1"/>
    <property type="molecule type" value="mRNA"/>
</dbReference>
<dbReference type="CCDS" id="CCDS40815.1"/>
<dbReference type="RefSeq" id="NP_001074657.1">
    <property type="nucleotide sequence ID" value="NM_001081188.2"/>
</dbReference>
<dbReference type="SMR" id="Q9D0M0"/>
<dbReference type="BioGRID" id="211480">
    <property type="interactions" value="4"/>
</dbReference>
<dbReference type="ComplexPortal" id="CPX-594">
    <property type="entry name" value="Nuclear exosome complex, Dis3-Exosc10 variant"/>
</dbReference>
<dbReference type="ComplexPortal" id="CPX-595">
    <property type="entry name" value="Nucleolar exosome complex, Exosc10 variant"/>
</dbReference>
<dbReference type="ComplexPortal" id="CPX-596">
    <property type="entry name" value="Cytoplasmic exosome complex, Dis3l variant"/>
</dbReference>
<dbReference type="ComplexPortal" id="CPX-598">
    <property type="entry name" value="Exosome complex, Dis3 variant"/>
</dbReference>
<dbReference type="ComplexPortal" id="CPX-601">
    <property type="entry name" value="Cytoplasmic exosome complex, Dis3l-Exosc10 variant"/>
</dbReference>
<dbReference type="FunCoup" id="Q9D0M0">
    <property type="interactions" value="3597"/>
</dbReference>
<dbReference type="STRING" id="10090.ENSMUSP00000026891"/>
<dbReference type="GlyGen" id="Q9D0M0">
    <property type="glycosylation" value="1 site, 1 O-linked glycan (1 site)"/>
</dbReference>
<dbReference type="iPTMnet" id="Q9D0M0"/>
<dbReference type="PhosphoSitePlus" id="Q9D0M0"/>
<dbReference type="SwissPalm" id="Q9D0M0"/>
<dbReference type="PaxDb" id="10090-ENSMUSP00000026891"/>
<dbReference type="PeptideAtlas" id="Q9D0M0"/>
<dbReference type="ProteomicsDB" id="275558"/>
<dbReference type="Pumba" id="Q9D0M0"/>
<dbReference type="Antibodypedia" id="12600">
    <property type="antibodies" value="308 antibodies from 27 providers"/>
</dbReference>
<dbReference type="Ensembl" id="ENSMUST00000026891.5">
    <property type="protein sequence ID" value="ENSMUSP00000026891.5"/>
    <property type="gene ID" value="ENSMUSG00000025785.6"/>
</dbReference>
<dbReference type="GeneID" id="66446"/>
<dbReference type="KEGG" id="mmu:66446"/>
<dbReference type="UCSC" id="uc009sfv.1">
    <property type="organism name" value="mouse"/>
</dbReference>
<dbReference type="AGR" id="MGI:1913696"/>
<dbReference type="CTD" id="23016"/>
<dbReference type="MGI" id="MGI:1913696">
    <property type="gene designation" value="Exosc7"/>
</dbReference>
<dbReference type="VEuPathDB" id="HostDB:ENSMUSG00000025785"/>
<dbReference type="eggNOG" id="KOG1612">
    <property type="taxonomic scope" value="Eukaryota"/>
</dbReference>
<dbReference type="GeneTree" id="ENSGT00950000183130"/>
<dbReference type="HOGENOM" id="CLU_038194_4_0_1"/>
<dbReference type="InParanoid" id="Q9D0M0"/>
<dbReference type="OMA" id="YNTRIPK"/>
<dbReference type="OrthoDB" id="272245at2759"/>
<dbReference type="PhylomeDB" id="Q9D0M0"/>
<dbReference type="TreeFam" id="TF320641"/>
<dbReference type="Reactome" id="R-MMU-429958">
    <property type="pathway name" value="mRNA decay by 3' to 5' exoribonuclease"/>
</dbReference>
<dbReference type="Reactome" id="R-MMU-450385">
    <property type="pathway name" value="Butyrate Response Factor 1 (BRF1) binds and destabilizes mRNA"/>
</dbReference>
<dbReference type="Reactome" id="R-MMU-450513">
    <property type="pathway name" value="Tristetraprolin (TTP, ZFP36) binds and destabilizes mRNA"/>
</dbReference>
<dbReference type="Reactome" id="R-MMU-450604">
    <property type="pathway name" value="KSRP (KHSRP) binds and destabilizes mRNA"/>
</dbReference>
<dbReference type="Reactome" id="R-MMU-6791226">
    <property type="pathway name" value="Major pathway of rRNA processing in the nucleolus and cytosol"/>
</dbReference>
<dbReference type="BioGRID-ORCS" id="66446">
    <property type="hits" value="27 hits in 75 CRISPR screens"/>
</dbReference>
<dbReference type="ChiTaRS" id="Exosc7">
    <property type="organism name" value="mouse"/>
</dbReference>
<dbReference type="PRO" id="PR:Q9D0M0"/>
<dbReference type="Proteomes" id="UP000000589">
    <property type="component" value="Chromosome 9"/>
</dbReference>
<dbReference type="RNAct" id="Q9D0M0">
    <property type="molecule type" value="protein"/>
</dbReference>
<dbReference type="Bgee" id="ENSMUSG00000025785">
    <property type="expression patterns" value="Expressed in otic placode and 278 other cell types or tissues"/>
</dbReference>
<dbReference type="ExpressionAtlas" id="Q9D0M0">
    <property type="expression patterns" value="baseline and differential"/>
</dbReference>
<dbReference type="GO" id="GO:0000177">
    <property type="term" value="C:cytoplasmic exosome (RNase complex)"/>
    <property type="evidence" value="ECO:0000303"/>
    <property type="project" value="ComplexPortal"/>
</dbReference>
<dbReference type="GO" id="GO:0005829">
    <property type="term" value="C:cytosol"/>
    <property type="evidence" value="ECO:0000266"/>
    <property type="project" value="ComplexPortal"/>
</dbReference>
<dbReference type="GO" id="GO:0000178">
    <property type="term" value="C:exosome (RNase complex)"/>
    <property type="evidence" value="ECO:0000250"/>
    <property type="project" value="UniProtKB"/>
</dbReference>
<dbReference type="GO" id="GO:0000176">
    <property type="term" value="C:nuclear exosome (RNase complex)"/>
    <property type="evidence" value="ECO:0000303"/>
    <property type="project" value="ComplexPortal"/>
</dbReference>
<dbReference type="GO" id="GO:0101019">
    <property type="term" value="C:nucleolar exosome (RNase complex)"/>
    <property type="evidence" value="ECO:0000303"/>
    <property type="project" value="ComplexPortal"/>
</dbReference>
<dbReference type="GO" id="GO:0005730">
    <property type="term" value="C:nucleolus"/>
    <property type="evidence" value="ECO:0000266"/>
    <property type="project" value="ComplexPortal"/>
</dbReference>
<dbReference type="GO" id="GO:0005634">
    <property type="term" value="C:nucleus"/>
    <property type="evidence" value="ECO:0000266"/>
    <property type="project" value="ComplexPortal"/>
</dbReference>
<dbReference type="GO" id="GO:0003723">
    <property type="term" value="F:RNA binding"/>
    <property type="evidence" value="ECO:0007669"/>
    <property type="project" value="UniProtKB-KW"/>
</dbReference>
<dbReference type="GO" id="GO:0006401">
    <property type="term" value="P:RNA catabolic process"/>
    <property type="evidence" value="ECO:0000266"/>
    <property type="project" value="ComplexPortal"/>
</dbReference>
<dbReference type="GO" id="GO:0006396">
    <property type="term" value="P:RNA processing"/>
    <property type="evidence" value="ECO:0000266"/>
    <property type="project" value="ComplexPortal"/>
</dbReference>
<dbReference type="GO" id="GO:0006364">
    <property type="term" value="P:rRNA processing"/>
    <property type="evidence" value="ECO:0007669"/>
    <property type="project" value="UniProtKB-KW"/>
</dbReference>
<dbReference type="CDD" id="cd11367">
    <property type="entry name" value="RNase_PH_RRP42"/>
    <property type="match status" value="1"/>
</dbReference>
<dbReference type="FunFam" id="3.30.230.70:FF:000009">
    <property type="entry name" value="Exosome complex component RRP42"/>
    <property type="match status" value="1"/>
</dbReference>
<dbReference type="Gene3D" id="3.30.230.70">
    <property type="entry name" value="GHMP Kinase, N-terminal domain"/>
    <property type="match status" value="1"/>
</dbReference>
<dbReference type="InterPro" id="IPR001247">
    <property type="entry name" value="ExoRNase_PH_dom1"/>
</dbReference>
<dbReference type="InterPro" id="IPR015847">
    <property type="entry name" value="ExoRNase_PH_dom2"/>
</dbReference>
<dbReference type="InterPro" id="IPR036345">
    <property type="entry name" value="ExoRNase_PH_dom2_sf"/>
</dbReference>
<dbReference type="InterPro" id="IPR050590">
    <property type="entry name" value="Exosome_comp_Rrp42_subfam"/>
</dbReference>
<dbReference type="InterPro" id="IPR027408">
    <property type="entry name" value="PNPase/RNase_PH_dom_sf"/>
</dbReference>
<dbReference type="InterPro" id="IPR020568">
    <property type="entry name" value="Ribosomal_Su5_D2-typ_SF"/>
</dbReference>
<dbReference type="PANTHER" id="PTHR11097:SF8">
    <property type="entry name" value="EXOSOME COMPLEX COMPONENT RRP42"/>
    <property type="match status" value="1"/>
</dbReference>
<dbReference type="PANTHER" id="PTHR11097">
    <property type="entry name" value="EXOSOME COMPLEX EXONUCLEASE RIBOSOMAL RNA PROCESSING PROTEIN"/>
    <property type="match status" value="1"/>
</dbReference>
<dbReference type="Pfam" id="PF01138">
    <property type="entry name" value="RNase_PH"/>
    <property type="match status" value="1"/>
</dbReference>
<dbReference type="Pfam" id="PF03725">
    <property type="entry name" value="RNase_PH_C"/>
    <property type="match status" value="1"/>
</dbReference>
<dbReference type="SUPFAM" id="SSF55666">
    <property type="entry name" value="Ribonuclease PH domain 2-like"/>
    <property type="match status" value="1"/>
</dbReference>
<dbReference type="SUPFAM" id="SSF54211">
    <property type="entry name" value="Ribosomal protein S5 domain 2-like"/>
    <property type="match status" value="1"/>
</dbReference>
<gene>
    <name type="primary">Exosc7</name>
    <name type="synonym">Rrp42</name>
</gene>
<protein>
    <recommendedName>
        <fullName>Exosome complex exonuclease RRP42</fullName>
    </recommendedName>
    <alternativeName>
        <fullName>Exosome component 7</fullName>
    </alternativeName>
    <alternativeName>
        <fullName>Ribosomal RNA-processing protein 42</fullName>
    </alternativeName>
</protein>
<keyword id="KW-0007">Acetylation</keyword>
<keyword id="KW-0963">Cytoplasm</keyword>
<keyword id="KW-0271">Exosome</keyword>
<keyword id="KW-0539">Nucleus</keyword>
<keyword id="KW-1185">Reference proteome</keyword>
<keyword id="KW-0694">RNA-binding</keyword>
<keyword id="KW-0698">rRNA processing</keyword>
<name>EXOS7_MOUSE</name>
<proteinExistence type="evidence at protein level"/>
<comment type="function">
    <text evidence="1">Non-catalytic component of the RNA exosome complex which has 3'-&gt;5' exoribonuclease activity and participates in a multitude of cellular RNA processing and degradation events. In the nucleus, the RNA exosome complex is involved in proper maturation of stable RNA species such as rRNA, snRNA and snoRNA, in the elimination of RNA processing by-products and non-coding 'pervasive' transcripts, such as antisense RNA species and promoter-upstream transcripts (PROMPTs), and of mRNAs with processing defects, thereby limiting or excluding their export to the cytoplasm. The RNA exosome may be involved in Ig class switch recombination (CSR) and/or Ig variable region somatic hypermutation (SHM) by targeting AICDA deamination activity to transcribed dsDNA substrates. In the cytoplasm, the RNA exosome complex is involved in general mRNA turnover and specifically degrades inherently unstable mRNAs containing AU-rich elements (AREs) within their 3' untranslated regions, and in RNA surveillance pathways, preventing translation of aberrant mRNAs. It seems to be involved in degradation of histone mRNA. The catalytic inactive RNA exosome core complex of 9 subunits (Exo-9) is proposed to play a pivotal role in the binding and presentation of RNA for ribonucleolysis, and to serve as a scaffold for the association with catalytic subunits and accessory proteins or complexes (By similarity).</text>
</comment>
<comment type="subunit">
    <text evidence="1">Component of the RNA exosome core complex (Exo-9), composed of EXOSC1, EXOSC2, EXOSC3, EXOSC4, EXOSC5, EXOSC6, EXOSC7, EXOSC8 and EXOSC9; within the complex interacts with EXOSC2 and EXOSC4 (By similarity). The catalytically inactive RNA exosome core complex (Exo-9) associates with the catalytic subunit EXOSC10/RRP6 (By similarity). Exo-9 may associate with DIS3 to form the nucleolar exosome complex, or DIS3L to form the cytoplasmic exosome complex (By similarity). Exo-9 is formed by a hexameric base ring consisting of the heterodimers EXOSC4-EXOSC9, EXOSC5-EXOSC8 and EXOSC6-EXOSC7, and a cap ring consisting of EXOSC1, EXOSC2 and EXOSC3 (By similarity). The RNA exosome complex associates with cofactors C1D/RRP47, MPHOSPH6/MPP6 and MTREX/MTR4 (By similarity). Interacts with ZC3HAV1 (By similarity). Interacts with DIS3; the interaction is direct (By similarity).</text>
</comment>
<comment type="subcellular location">
    <subcellularLocation>
        <location evidence="1">Nucleus</location>
        <location evidence="1">Nucleolus</location>
    </subcellularLocation>
    <subcellularLocation>
        <location evidence="1">Cytoplasm</location>
    </subcellularLocation>
    <subcellularLocation>
        <location evidence="1">Nucleus</location>
    </subcellularLocation>
</comment>
<comment type="similarity">
    <text evidence="2">Belongs to the RNase PH family.</text>
</comment>
<reference key="1">
    <citation type="journal article" date="2005" name="Science">
        <title>The transcriptional landscape of the mammalian genome.</title>
        <authorList>
            <person name="Carninci P."/>
            <person name="Kasukawa T."/>
            <person name="Katayama S."/>
            <person name="Gough J."/>
            <person name="Frith M.C."/>
            <person name="Maeda N."/>
            <person name="Oyama R."/>
            <person name="Ravasi T."/>
            <person name="Lenhard B."/>
            <person name="Wells C."/>
            <person name="Kodzius R."/>
            <person name="Shimokawa K."/>
            <person name="Bajic V.B."/>
            <person name="Brenner S.E."/>
            <person name="Batalov S."/>
            <person name="Forrest A.R."/>
            <person name="Zavolan M."/>
            <person name="Davis M.J."/>
            <person name="Wilming L.G."/>
            <person name="Aidinis V."/>
            <person name="Allen J.E."/>
            <person name="Ambesi-Impiombato A."/>
            <person name="Apweiler R."/>
            <person name="Aturaliya R.N."/>
            <person name="Bailey T.L."/>
            <person name="Bansal M."/>
            <person name="Baxter L."/>
            <person name="Beisel K.W."/>
            <person name="Bersano T."/>
            <person name="Bono H."/>
            <person name="Chalk A.M."/>
            <person name="Chiu K.P."/>
            <person name="Choudhary V."/>
            <person name="Christoffels A."/>
            <person name="Clutterbuck D.R."/>
            <person name="Crowe M.L."/>
            <person name="Dalla E."/>
            <person name="Dalrymple B.P."/>
            <person name="de Bono B."/>
            <person name="Della Gatta G."/>
            <person name="di Bernardo D."/>
            <person name="Down T."/>
            <person name="Engstrom P."/>
            <person name="Fagiolini M."/>
            <person name="Faulkner G."/>
            <person name="Fletcher C.F."/>
            <person name="Fukushima T."/>
            <person name="Furuno M."/>
            <person name="Futaki S."/>
            <person name="Gariboldi M."/>
            <person name="Georgii-Hemming P."/>
            <person name="Gingeras T.R."/>
            <person name="Gojobori T."/>
            <person name="Green R.E."/>
            <person name="Gustincich S."/>
            <person name="Harbers M."/>
            <person name="Hayashi Y."/>
            <person name="Hensch T.K."/>
            <person name="Hirokawa N."/>
            <person name="Hill D."/>
            <person name="Huminiecki L."/>
            <person name="Iacono M."/>
            <person name="Ikeo K."/>
            <person name="Iwama A."/>
            <person name="Ishikawa T."/>
            <person name="Jakt M."/>
            <person name="Kanapin A."/>
            <person name="Katoh M."/>
            <person name="Kawasawa Y."/>
            <person name="Kelso J."/>
            <person name="Kitamura H."/>
            <person name="Kitano H."/>
            <person name="Kollias G."/>
            <person name="Krishnan S.P."/>
            <person name="Kruger A."/>
            <person name="Kummerfeld S.K."/>
            <person name="Kurochkin I.V."/>
            <person name="Lareau L.F."/>
            <person name="Lazarevic D."/>
            <person name="Lipovich L."/>
            <person name="Liu J."/>
            <person name="Liuni S."/>
            <person name="McWilliam S."/>
            <person name="Madan Babu M."/>
            <person name="Madera M."/>
            <person name="Marchionni L."/>
            <person name="Matsuda H."/>
            <person name="Matsuzawa S."/>
            <person name="Miki H."/>
            <person name="Mignone F."/>
            <person name="Miyake S."/>
            <person name="Morris K."/>
            <person name="Mottagui-Tabar S."/>
            <person name="Mulder N."/>
            <person name="Nakano N."/>
            <person name="Nakauchi H."/>
            <person name="Ng P."/>
            <person name="Nilsson R."/>
            <person name="Nishiguchi S."/>
            <person name="Nishikawa S."/>
            <person name="Nori F."/>
            <person name="Ohara O."/>
            <person name="Okazaki Y."/>
            <person name="Orlando V."/>
            <person name="Pang K.C."/>
            <person name="Pavan W.J."/>
            <person name="Pavesi G."/>
            <person name="Pesole G."/>
            <person name="Petrovsky N."/>
            <person name="Piazza S."/>
            <person name="Reed J."/>
            <person name="Reid J.F."/>
            <person name="Ring B.Z."/>
            <person name="Ringwald M."/>
            <person name="Rost B."/>
            <person name="Ruan Y."/>
            <person name="Salzberg S.L."/>
            <person name="Sandelin A."/>
            <person name="Schneider C."/>
            <person name="Schoenbach C."/>
            <person name="Sekiguchi K."/>
            <person name="Semple C.A."/>
            <person name="Seno S."/>
            <person name="Sessa L."/>
            <person name="Sheng Y."/>
            <person name="Shibata Y."/>
            <person name="Shimada H."/>
            <person name="Shimada K."/>
            <person name="Silva D."/>
            <person name="Sinclair B."/>
            <person name="Sperling S."/>
            <person name="Stupka E."/>
            <person name="Sugiura K."/>
            <person name="Sultana R."/>
            <person name="Takenaka Y."/>
            <person name="Taki K."/>
            <person name="Tammoja K."/>
            <person name="Tan S.L."/>
            <person name="Tang S."/>
            <person name="Taylor M.S."/>
            <person name="Tegner J."/>
            <person name="Teichmann S.A."/>
            <person name="Ueda H.R."/>
            <person name="van Nimwegen E."/>
            <person name="Verardo R."/>
            <person name="Wei C.L."/>
            <person name="Yagi K."/>
            <person name="Yamanishi H."/>
            <person name="Zabarovsky E."/>
            <person name="Zhu S."/>
            <person name="Zimmer A."/>
            <person name="Hide W."/>
            <person name="Bult C."/>
            <person name="Grimmond S.M."/>
            <person name="Teasdale R.D."/>
            <person name="Liu E.T."/>
            <person name="Brusic V."/>
            <person name="Quackenbush J."/>
            <person name="Wahlestedt C."/>
            <person name="Mattick J.S."/>
            <person name="Hume D.A."/>
            <person name="Kai C."/>
            <person name="Sasaki D."/>
            <person name="Tomaru Y."/>
            <person name="Fukuda S."/>
            <person name="Kanamori-Katayama M."/>
            <person name="Suzuki M."/>
            <person name="Aoki J."/>
            <person name="Arakawa T."/>
            <person name="Iida J."/>
            <person name="Imamura K."/>
            <person name="Itoh M."/>
            <person name="Kato T."/>
            <person name="Kawaji H."/>
            <person name="Kawagashira N."/>
            <person name="Kawashima T."/>
            <person name="Kojima M."/>
            <person name="Kondo S."/>
            <person name="Konno H."/>
            <person name="Nakano K."/>
            <person name="Ninomiya N."/>
            <person name="Nishio T."/>
            <person name="Okada M."/>
            <person name="Plessy C."/>
            <person name="Shibata K."/>
            <person name="Shiraki T."/>
            <person name="Suzuki S."/>
            <person name="Tagami M."/>
            <person name="Waki K."/>
            <person name="Watahiki A."/>
            <person name="Okamura-Oho Y."/>
            <person name="Suzuki H."/>
            <person name="Kawai J."/>
            <person name="Hayashizaki Y."/>
        </authorList>
    </citation>
    <scope>NUCLEOTIDE SEQUENCE [LARGE SCALE MRNA]</scope>
    <source>
        <strain>C57BL/6J</strain>
        <tissue>Embryo</tissue>
    </source>
</reference>
<reference key="2">
    <citation type="journal article" date="2009" name="PLoS Biol.">
        <title>Lineage-specific biology revealed by a finished genome assembly of the mouse.</title>
        <authorList>
            <person name="Church D.M."/>
            <person name="Goodstadt L."/>
            <person name="Hillier L.W."/>
            <person name="Zody M.C."/>
            <person name="Goldstein S."/>
            <person name="She X."/>
            <person name="Bult C.J."/>
            <person name="Agarwala R."/>
            <person name="Cherry J.L."/>
            <person name="DiCuccio M."/>
            <person name="Hlavina W."/>
            <person name="Kapustin Y."/>
            <person name="Meric P."/>
            <person name="Maglott D."/>
            <person name="Birtle Z."/>
            <person name="Marques A.C."/>
            <person name="Graves T."/>
            <person name="Zhou S."/>
            <person name="Teague B."/>
            <person name="Potamousis K."/>
            <person name="Churas C."/>
            <person name="Place M."/>
            <person name="Herschleb J."/>
            <person name="Runnheim R."/>
            <person name="Forrest D."/>
            <person name="Amos-Landgraf J."/>
            <person name="Schwartz D.C."/>
            <person name="Cheng Z."/>
            <person name="Lindblad-Toh K."/>
            <person name="Eichler E.E."/>
            <person name="Ponting C.P."/>
        </authorList>
    </citation>
    <scope>NUCLEOTIDE SEQUENCE [LARGE SCALE GENOMIC DNA]</scope>
    <source>
        <strain>C57BL/6J</strain>
    </source>
</reference>
<reference key="3">
    <citation type="submission" date="2005-07" db="EMBL/GenBank/DDBJ databases">
        <authorList>
            <person name="Mural R.J."/>
            <person name="Adams M.D."/>
            <person name="Myers E.W."/>
            <person name="Smith H.O."/>
            <person name="Venter J.C."/>
        </authorList>
    </citation>
    <scope>NUCLEOTIDE SEQUENCE [LARGE SCALE GENOMIC DNA]</scope>
</reference>
<reference key="4">
    <citation type="journal article" date="2004" name="Genome Res.">
        <title>The status, quality, and expansion of the NIH full-length cDNA project: the Mammalian Gene Collection (MGC).</title>
        <authorList>
            <consortium name="The MGC Project Team"/>
        </authorList>
    </citation>
    <scope>NUCLEOTIDE SEQUENCE [LARGE SCALE MRNA]</scope>
    <source>
        <strain>129/Sv X 129SvCp</strain>
        <tissue>Brain</tissue>
        <tissue>Embryonic stem cell</tissue>
    </source>
</reference>
<reference key="5">
    <citation type="journal article" date="2010" name="Cell">
        <title>A tissue-specific atlas of mouse protein phosphorylation and expression.</title>
        <authorList>
            <person name="Huttlin E.L."/>
            <person name="Jedrychowski M.P."/>
            <person name="Elias J.E."/>
            <person name="Goswami T."/>
            <person name="Rad R."/>
            <person name="Beausoleil S.A."/>
            <person name="Villen J."/>
            <person name="Haas W."/>
            <person name="Sowa M.E."/>
            <person name="Gygi S.P."/>
        </authorList>
    </citation>
    <scope>IDENTIFICATION BY MASS SPECTROMETRY [LARGE SCALE ANALYSIS]</scope>
    <source>
        <tissue>Lung</tissue>
        <tissue>Spleen</tissue>
        <tissue>Testis</tissue>
    </source>
</reference>
<sequence>MASVALSEAEKVYIVHGVQEDLRVDGRGCEDYRCVEVETDVVSNTSGSARVKLGHTDILVGVKAEMGTPKLEKPNEGYLEFFVDCSANATPEFEGRGGDDLGTEIANTLYRIFNNKSSVDLRSLCISPREHCWVLYVDVLLLECGGNLFDAISIAVKAALFNTRIPRVRVLEDEEGAKDIELSDDPYDCIRLSVENVPCIVTLCKIGCRHVVDATLQEEACSLASLLVSVTSKGVVTCMRKVGKGSLDPESIFEMMESSKRVGKVLHVSLQSLLHKEESLGPKRPRVGFLG</sequence>
<organism>
    <name type="scientific">Mus musculus</name>
    <name type="common">Mouse</name>
    <dbReference type="NCBI Taxonomy" id="10090"/>
    <lineage>
        <taxon>Eukaryota</taxon>
        <taxon>Metazoa</taxon>
        <taxon>Chordata</taxon>
        <taxon>Craniata</taxon>
        <taxon>Vertebrata</taxon>
        <taxon>Euteleostomi</taxon>
        <taxon>Mammalia</taxon>
        <taxon>Eutheria</taxon>
        <taxon>Euarchontoglires</taxon>
        <taxon>Glires</taxon>
        <taxon>Rodentia</taxon>
        <taxon>Myomorpha</taxon>
        <taxon>Muroidea</taxon>
        <taxon>Muridae</taxon>
        <taxon>Murinae</taxon>
        <taxon>Mus</taxon>
        <taxon>Mus</taxon>
    </lineage>
</organism>
<feature type="initiator methionine" description="Removed" evidence="1">
    <location>
        <position position="1"/>
    </location>
</feature>
<feature type="chain" id="PRO_0000139964" description="Exosome complex exonuclease RRP42">
    <location>
        <begin position="2"/>
        <end position="291"/>
    </location>
</feature>
<feature type="modified residue" description="N-acetylalanine" evidence="1">
    <location>
        <position position="2"/>
    </location>
</feature>
<feature type="modified residue" description="N6-acetyllysine" evidence="1">
    <location>
        <position position="116"/>
    </location>
</feature>
<accession>Q9D0M0</accession>
<accession>Q4VBW5</accession>
<accession>Q9CT77</accession>